<protein>
    <recommendedName>
        <fullName>Peptide chain release factor 2</fullName>
        <shortName>RF-2</shortName>
    </recommendedName>
</protein>
<comment type="function">
    <text evidence="1">Peptide chain release factor 2 directs the termination of translation in response to the peptide chain termination codons UGA and UAA.</text>
</comment>
<comment type="subcellular location">
    <subcellularLocation>
        <location evidence="1">Cytoplasm</location>
    </subcellularLocation>
</comment>
<comment type="PTM">
    <text evidence="1">Methylated by PrmC. Methylation increases the termination efficiency of RF2 (By similarity).</text>
</comment>
<comment type="similarity">
    <text evidence="2">Belongs to the prokaryotic/mitochondrial release factor family.</text>
</comment>
<proteinExistence type="inferred from homology"/>
<reference key="1">
    <citation type="journal article" date="1999" name="Nature">
        <title>Genomic sequence comparison of two unrelated isolates of the human gastric pathogen Helicobacter pylori.</title>
        <authorList>
            <person name="Alm R.A."/>
            <person name="Ling L.-S.L."/>
            <person name="Moir D.T."/>
            <person name="King B.L."/>
            <person name="Brown E.D."/>
            <person name="Doig P.C."/>
            <person name="Smith D.R."/>
            <person name="Noonan B."/>
            <person name="Guild B.C."/>
            <person name="deJonge B.L."/>
            <person name="Carmel G."/>
            <person name="Tummino P.J."/>
            <person name="Caruso A."/>
            <person name="Uria-Nickelsen M."/>
            <person name="Mills D.M."/>
            <person name="Ives C."/>
            <person name="Gibson R."/>
            <person name="Merberg D."/>
            <person name="Mills S.D."/>
            <person name="Jiang Q."/>
            <person name="Taylor D.E."/>
            <person name="Vovis G.F."/>
            <person name="Trust T.J."/>
        </authorList>
    </citation>
    <scope>NUCLEOTIDE SEQUENCE [LARGE SCALE GENOMIC DNA]</scope>
    <source>
        <strain>J99 / ATCC 700824</strain>
    </source>
</reference>
<dbReference type="EMBL" id="AE001439">
    <property type="protein sequence ID" value="AAD05740.1"/>
    <property type="molecule type" value="Genomic_DNA"/>
</dbReference>
<dbReference type="PIR" id="F71966">
    <property type="entry name" value="F71966"/>
</dbReference>
<dbReference type="RefSeq" id="WP_000371078.1">
    <property type="nucleotide sequence ID" value="NC_000921.1"/>
</dbReference>
<dbReference type="SMR" id="Q9ZMR1"/>
<dbReference type="KEGG" id="hpj:jhp_0157"/>
<dbReference type="PATRIC" id="fig|85963.30.peg.865"/>
<dbReference type="eggNOG" id="COG1186">
    <property type="taxonomic scope" value="Bacteria"/>
</dbReference>
<dbReference type="Proteomes" id="UP000000804">
    <property type="component" value="Chromosome"/>
</dbReference>
<dbReference type="GO" id="GO:0005737">
    <property type="term" value="C:cytoplasm"/>
    <property type="evidence" value="ECO:0007669"/>
    <property type="project" value="UniProtKB-SubCell"/>
</dbReference>
<dbReference type="GO" id="GO:0016149">
    <property type="term" value="F:translation release factor activity, codon specific"/>
    <property type="evidence" value="ECO:0007669"/>
    <property type="project" value="UniProtKB-UniRule"/>
</dbReference>
<dbReference type="FunFam" id="3.30.160.20:FF:000010">
    <property type="entry name" value="Peptide chain release factor 2"/>
    <property type="match status" value="1"/>
</dbReference>
<dbReference type="Gene3D" id="3.30.160.20">
    <property type="match status" value="1"/>
</dbReference>
<dbReference type="Gene3D" id="3.30.70.1660">
    <property type="match status" value="1"/>
</dbReference>
<dbReference type="Gene3D" id="1.20.58.410">
    <property type="entry name" value="Release factor"/>
    <property type="match status" value="1"/>
</dbReference>
<dbReference type="HAMAP" id="MF_00094">
    <property type="entry name" value="Rel_fac_2"/>
    <property type="match status" value="1"/>
</dbReference>
<dbReference type="InterPro" id="IPR005139">
    <property type="entry name" value="PCRF"/>
</dbReference>
<dbReference type="InterPro" id="IPR000352">
    <property type="entry name" value="Pep_chain_release_fac_I"/>
</dbReference>
<dbReference type="InterPro" id="IPR045853">
    <property type="entry name" value="Pep_chain_release_fac_I_sf"/>
</dbReference>
<dbReference type="InterPro" id="IPR004374">
    <property type="entry name" value="PrfB"/>
</dbReference>
<dbReference type="NCBIfam" id="TIGR00020">
    <property type="entry name" value="prfB"/>
    <property type="match status" value="1"/>
</dbReference>
<dbReference type="PANTHER" id="PTHR43116:SF3">
    <property type="entry name" value="CLASS I PEPTIDE CHAIN RELEASE FACTOR"/>
    <property type="match status" value="1"/>
</dbReference>
<dbReference type="PANTHER" id="PTHR43116">
    <property type="entry name" value="PEPTIDE CHAIN RELEASE FACTOR 2"/>
    <property type="match status" value="1"/>
</dbReference>
<dbReference type="Pfam" id="PF03462">
    <property type="entry name" value="PCRF"/>
    <property type="match status" value="1"/>
</dbReference>
<dbReference type="Pfam" id="PF00472">
    <property type="entry name" value="RF-1"/>
    <property type="match status" value="1"/>
</dbReference>
<dbReference type="SMART" id="SM00937">
    <property type="entry name" value="PCRF"/>
    <property type="match status" value="1"/>
</dbReference>
<dbReference type="SUPFAM" id="SSF75620">
    <property type="entry name" value="Release factor"/>
    <property type="match status" value="1"/>
</dbReference>
<dbReference type="PROSITE" id="PS00745">
    <property type="entry name" value="RF_PROK_I"/>
    <property type="match status" value="1"/>
</dbReference>
<name>RF2_HELPJ</name>
<organism>
    <name type="scientific">Helicobacter pylori (strain J99 / ATCC 700824)</name>
    <name type="common">Campylobacter pylori J99</name>
    <dbReference type="NCBI Taxonomy" id="85963"/>
    <lineage>
        <taxon>Bacteria</taxon>
        <taxon>Pseudomonadati</taxon>
        <taxon>Campylobacterota</taxon>
        <taxon>Epsilonproteobacteria</taxon>
        <taxon>Campylobacterales</taxon>
        <taxon>Helicobacteraceae</taxon>
        <taxon>Helicobacter</taxon>
    </lineage>
</organism>
<evidence type="ECO:0000250" key="1"/>
<evidence type="ECO:0000305" key="2"/>
<accession>Q9ZMR1</accession>
<gene>
    <name type="primary">prfB</name>
    <name type="ordered locus">jhp_0157</name>
</gene>
<sequence length="363" mass="41329">MDNYTYSELLKSLQNKCDNIALIIKPEKIKQELERIEKEQEDPNFWQDVLKARDTNKEKVRLNRLLETYQKMKNSLDESVELFELAQNDSDEVTLSLLYEEAPTLEHSVQKVEIEIMLSGENDASNAIITIQPGAGGTESQDWASILYRMYLRWAERKSFKSEILDYQDGEEAGIKGVAFIIKGENAYGYLKNENGVHRLVRISPFDANAKRHTSFASVQISPELDDDIDIEIDEKDVRYDYYRASGAGGQHVNKTESAVRITHFPTGIVVQCQNDRSQHKNKASALKMLKSKLYELELEKQQSSAKNEEKSEIGWGHQIRSYVLAPYQQVKDARSNIAYSNVEAILDGDIDAILEGVLIAKA</sequence>
<feature type="chain" id="PRO_0000166822" description="Peptide chain release factor 2">
    <location>
        <begin position="1"/>
        <end position="363"/>
    </location>
</feature>
<feature type="modified residue" description="N5-methylglutamine" evidence="1">
    <location>
        <position position="251"/>
    </location>
</feature>
<keyword id="KW-0963">Cytoplasm</keyword>
<keyword id="KW-0488">Methylation</keyword>
<keyword id="KW-0648">Protein biosynthesis</keyword>